<sequence>MIQMQTNLDVADNSGARRVQCIKVLGGSKRKYASVGDIIVVSVKEAIPRGRVKKGDVRKAVVVRTAKEVRREDGTAIRFDRNAAVILNNNNEPVGTRIFGPVVRELRAKNFMKIISLAPEVL</sequence>
<gene>
    <name evidence="1" type="primary">rplN</name>
    <name type="ordered locus">TM1040_0264</name>
</gene>
<keyword id="KW-1185">Reference proteome</keyword>
<keyword id="KW-0687">Ribonucleoprotein</keyword>
<keyword id="KW-0689">Ribosomal protein</keyword>
<keyword id="KW-0694">RNA-binding</keyword>
<keyword id="KW-0699">rRNA-binding</keyword>
<reference key="1">
    <citation type="submission" date="2006-05" db="EMBL/GenBank/DDBJ databases">
        <title>Complete sequence of chromosome of Silicibacter sp. TM1040.</title>
        <authorList>
            <consortium name="US DOE Joint Genome Institute"/>
            <person name="Copeland A."/>
            <person name="Lucas S."/>
            <person name="Lapidus A."/>
            <person name="Barry K."/>
            <person name="Detter J.C."/>
            <person name="Glavina del Rio T."/>
            <person name="Hammon N."/>
            <person name="Israni S."/>
            <person name="Dalin E."/>
            <person name="Tice H."/>
            <person name="Pitluck S."/>
            <person name="Brettin T."/>
            <person name="Bruce D."/>
            <person name="Han C."/>
            <person name="Tapia R."/>
            <person name="Goodwin L."/>
            <person name="Thompson L.S."/>
            <person name="Gilna P."/>
            <person name="Schmutz J."/>
            <person name="Larimer F."/>
            <person name="Land M."/>
            <person name="Hauser L."/>
            <person name="Kyrpides N."/>
            <person name="Kim E."/>
            <person name="Belas R."/>
            <person name="Moran M.A."/>
            <person name="Buchan A."/>
            <person name="Gonzalez J.M."/>
            <person name="Schell M.A."/>
            <person name="Sun F."/>
            <person name="Richardson P."/>
        </authorList>
    </citation>
    <scope>NUCLEOTIDE SEQUENCE [LARGE SCALE GENOMIC DNA]</scope>
    <source>
        <strain>TM1040</strain>
    </source>
</reference>
<evidence type="ECO:0000255" key="1">
    <source>
        <dbReference type="HAMAP-Rule" id="MF_01367"/>
    </source>
</evidence>
<evidence type="ECO:0000305" key="2"/>
<accession>Q1GK19</accession>
<dbReference type="EMBL" id="CP000377">
    <property type="protein sequence ID" value="ABF62997.1"/>
    <property type="molecule type" value="Genomic_DNA"/>
</dbReference>
<dbReference type="RefSeq" id="WP_005621870.1">
    <property type="nucleotide sequence ID" value="NC_008044.1"/>
</dbReference>
<dbReference type="SMR" id="Q1GK19"/>
<dbReference type="STRING" id="292414.TM1040_0264"/>
<dbReference type="GeneID" id="78398336"/>
<dbReference type="KEGG" id="sit:TM1040_0264"/>
<dbReference type="eggNOG" id="COG0093">
    <property type="taxonomic scope" value="Bacteria"/>
</dbReference>
<dbReference type="HOGENOM" id="CLU_095071_2_1_5"/>
<dbReference type="OrthoDB" id="9806379at2"/>
<dbReference type="Proteomes" id="UP000000636">
    <property type="component" value="Chromosome"/>
</dbReference>
<dbReference type="GO" id="GO:0022625">
    <property type="term" value="C:cytosolic large ribosomal subunit"/>
    <property type="evidence" value="ECO:0007669"/>
    <property type="project" value="TreeGrafter"/>
</dbReference>
<dbReference type="GO" id="GO:0070180">
    <property type="term" value="F:large ribosomal subunit rRNA binding"/>
    <property type="evidence" value="ECO:0007669"/>
    <property type="project" value="TreeGrafter"/>
</dbReference>
<dbReference type="GO" id="GO:0003735">
    <property type="term" value="F:structural constituent of ribosome"/>
    <property type="evidence" value="ECO:0007669"/>
    <property type="project" value="InterPro"/>
</dbReference>
<dbReference type="GO" id="GO:0006412">
    <property type="term" value="P:translation"/>
    <property type="evidence" value="ECO:0007669"/>
    <property type="project" value="UniProtKB-UniRule"/>
</dbReference>
<dbReference type="CDD" id="cd00337">
    <property type="entry name" value="Ribosomal_uL14"/>
    <property type="match status" value="1"/>
</dbReference>
<dbReference type="FunFam" id="2.40.150.20:FF:000001">
    <property type="entry name" value="50S ribosomal protein L14"/>
    <property type="match status" value="1"/>
</dbReference>
<dbReference type="Gene3D" id="2.40.150.20">
    <property type="entry name" value="Ribosomal protein L14"/>
    <property type="match status" value="1"/>
</dbReference>
<dbReference type="HAMAP" id="MF_01367">
    <property type="entry name" value="Ribosomal_uL14"/>
    <property type="match status" value="1"/>
</dbReference>
<dbReference type="InterPro" id="IPR000218">
    <property type="entry name" value="Ribosomal_uL14"/>
</dbReference>
<dbReference type="InterPro" id="IPR005745">
    <property type="entry name" value="Ribosomal_uL14_bac-type"/>
</dbReference>
<dbReference type="InterPro" id="IPR019972">
    <property type="entry name" value="Ribosomal_uL14_CS"/>
</dbReference>
<dbReference type="InterPro" id="IPR036853">
    <property type="entry name" value="Ribosomal_uL14_sf"/>
</dbReference>
<dbReference type="NCBIfam" id="TIGR01067">
    <property type="entry name" value="rplN_bact"/>
    <property type="match status" value="1"/>
</dbReference>
<dbReference type="PANTHER" id="PTHR11761">
    <property type="entry name" value="50S/60S RIBOSOMAL PROTEIN L14/L23"/>
    <property type="match status" value="1"/>
</dbReference>
<dbReference type="PANTHER" id="PTHR11761:SF3">
    <property type="entry name" value="LARGE RIBOSOMAL SUBUNIT PROTEIN UL14M"/>
    <property type="match status" value="1"/>
</dbReference>
<dbReference type="Pfam" id="PF00238">
    <property type="entry name" value="Ribosomal_L14"/>
    <property type="match status" value="1"/>
</dbReference>
<dbReference type="SMART" id="SM01374">
    <property type="entry name" value="Ribosomal_L14"/>
    <property type="match status" value="1"/>
</dbReference>
<dbReference type="SUPFAM" id="SSF50193">
    <property type="entry name" value="Ribosomal protein L14"/>
    <property type="match status" value="1"/>
</dbReference>
<dbReference type="PROSITE" id="PS00049">
    <property type="entry name" value="RIBOSOMAL_L14"/>
    <property type="match status" value="1"/>
</dbReference>
<feature type="chain" id="PRO_0000266564" description="Large ribosomal subunit protein uL14">
    <location>
        <begin position="1"/>
        <end position="122"/>
    </location>
</feature>
<protein>
    <recommendedName>
        <fullName evidence="1">Large ribosomal subunit protein uL14</fullName>
    </recommendedName>
    <alternativeName>
        <fullName evidence="2">50S ribosomal protein L14</fullName>
    </alternativeName>
</protein>
<organism>
    <name type="scientific">Ruegeria sp. (strain TM1040)</name>
    <name type="common">Silicibacter sp.</name>
    <dbReference type="NCBI Taxonomy" id="292414"/>
    <lineage>
        <taxon>Bacteria</taxon>
        <taxon>Pseudomonadati</taxon>
        <taxon>Pseudomonadota</taxon>
        <taxon>Alphaproteobacteria</taxon>
        <taxon>Rhodobacterales</taxon>
        <taxon>Roseobacteraceae</taxon>
        <taxon>Ruegeria</taxon>
    </lineage>
</organism>
<comment type="function">
    <text evidence="1">Binds to 23S rRNA. Forms part of two intersubunit bridges in the 70S ribosome.</text>
</comment>
<comment type="subunit">
    <text evidence="1">Part of the 50S ribosomal subunit. Forms a cluster with proteins L3 and L19. In the 70S ribosome, L14 and L19 interact and together make contacts with the 16S rRNA in bridges B5 and B8.</text>
</comment>
<comment type="similarity">
    <text evidence="1">Belongs to the universal ribosomal protein uL14 family.</text>
</comment>
<proteinExistence type="inferred from homology"/>
<name>RL14_RUEST</name>